<organism>
    <name type="scientific">Bos taurus</name>
    <name type="common">Bovine</name>
    <dbReference type="NCBI Taxonomy" id="9913"/>
    <lineage>
        <taxon>Eukaryota</taxon>
        <taxon>Metazoa</taxon>
        <taxon>Chordata</taxon>
        <taxon>Craniata</taxon>
        <taxon>Vertebrata</taxon>
        <taxon>Euteleostomi</taxon>
        <taxon>Mammalia</taxon>
        <taxon>Eutheria</taxon>
        <taxon>Laurasiatheria</taxon>
        <taxon>Artiodactyla</taxon>
        <taxon>Ruminantia</taxon>
        <taxon>Pecora</taxon>
        <taxon>Bovidae</taxon>
        <taxon>Bovinae</taxon>
        <taxon>Bos</taxon>
    </lineage>
</organism>
<name>EXOS3_BOVIN</name>
<proteinExistence type="evidence at transcript level"/>
<accession>Q3T0E1</accession>
<comment type="function">
    <text evidence="1">Non-catalytic component of the RNA exosome complex which has 3'-&gt;5' exoribonuclease activity and participates in a multitude of cellular RNA processing and degradation events. In the nucleus, the RNA exosome complex is involved in proper maturation of stable RNA species such as rRNA, snRNA and snoRNA, in the elimination of RNA processing by-products and non-coding 'pervasive' transcripts, such as antisense RNA species and promoter-upstream transcripts (PROMPTs), and of mRNAs with processing defects, thereby limiting or excluding their export to the cytoplasm. The RNA exosome may be involved in Ig class switch recombination (CSR) and/or Ig variable region somatic hypermutation (SHM) by targeting AICDA deamination activity to transcribed dsDNA substrates. In the cytoplasm, the RNA exosome complex is involved in general mRNA turnover and specifically degrades inherently unstable mRNAs containing AU-rich elements (AREs) within their 3' untranslated regions, and in RNA surveillance pathways, preventing translation of aberrant mRNAs. It seems to be involved in degradation of histone mRNA. The catalytic inactive RNA exosome core complex of 9 subunits (Exo-9) is proposed to play a pivotal role in the binding and presentation of RNA for ribonucleolysis, and to serve as a scaffold for the association with catalytic subunits and accessory proteins or complexes. EXOSC3 as peripheral part of the Exo-9 complex stabilizes the hexameric ring of RNase PH-domain subunits through contacts with EXOSC9 and EXOSC5 (By similarity).</text>
</comment>
<comment type="subunit">
    <text evidence="1">Component of the RNA exosome core complex (Exo-9), composed of EXOSC1, EXOSC2, EXOSC3, EXOSC4, EXOSC5, EXOSC6, EXOSC7, EXOSC8 and EXOSC9; within the complex interacts with EXOSC5 and EXOSC9 (By similarity). The catalytically inactive RNA exosome core complex (Exo-9) associates with the catalytic subunit EXOSC10/RRP6 (By similarity). Exo-9 may associate with DIS3 to form the nucleolar exosome complex, or DIS3L to form the cytoplasmic exosome complex (By similarity). Exo-9 is formed by a hexameric base ring consisting of the heterodimers EXOSC4-EXOSC9, EXOSC5-EXOSC8 and EXOSC6-EXOSC7, and a cap ring consisting of EXOSC1, EXOSC2 and EXOSC3 (By similarity). The RNA exosome complex associates with cofactors C1D/RRP47, MPHOSPH6/MPP6 and MTREX/MTR4 (By similarity). Interacts with MPHOSPH6/MPP6; the interaction is direct (By similarity). Interacts with GTPBP1 (By similarity). Interacts with ZC3HAV1 (By similarity). Interacts with DDX17 only in the presence of ZC3HAV1 in an RNA-independent manner (By similarity). Interacts with DHX36; this interaction occurs in a RNase-insensitive manner (By similarity). Interacts with HBS1L isoform 2 (By similarity).</text>
</comment>
<comment type="subcellular location">
    <subcellularLocation>
        <location evidence="1">Cytoplasm</location>
    </subcellularLocation>
    <subcellularLocation>
        <location evidence="1">Nucleus</location>
        <location evidence="1">Nucleolus</location>
    </subcellularLocation>
    <subcellularLocation>
        <location evidence="1">Nucleus</location>
    </subcellularLocation>
</comment>
<comment type="similarity">
    <text evidence="2">Belongs to the RRP40 family.</text>
</comment>
<feature type="initiator methionine" description="Removed" evidence="1">
    <location>
        <position position="1"/>
    </location>
</feature>
<feature type="chain" id="PRO_0000287529" description="Exosome complex component RRP40">
    <location>
        <begin position="2"/>
        <end position="275"/>
    </location>
</feature>
<feature type="modified residue" description="N-acetylalanine" evidence="1">
    <location>
        <position position="2"/>
    </location>
</feature>
<feature type="cross-link" description="Glycyl lysine isopeptide (Lys-Gly) (interchain with G-Cter in SUMO2)" evidence="1">
    <location>
        <position position="151"/>
    </location>
</feature>
<gene>
    <name type="primary">EXOSC3</name>
    <name type="synonym">RRP40</name>
</gene>
<dbReference type="EMBL" id="BC102436">
    <property type="protein sequence ID" value="AAI02437.1"/>
    <property type="molecule type" value="mRNA"/>
</dbReference>
<dbReference type="RefSeq" id="NP_001030474.1">
    <property type="nucleotide sequence ID" value="NM_001035397.2"/>
</dbReference>
<dbReference type="SMR" id="Q3T0E1"/>
<dbReference type="FunCoup" id="Q3T0E1">
    <property type="interactions" value="3202"/>
</dbReference>
<dbReference type="STRING" id="9913.ENSBTAP00000025185"/>
<dbReference type="PaxDb" id="9913-ENSBTAP00000025185"/>
<dbReference type="Ensembl" id="ENSBTAT00000025185.4">
    <property type="protein sequence ID" value="ENSBTAP00000025185.3"/>
    <property type="gene ID" value="ENSBTAG00000018925.5"/>
</dbReference>
<dbReference type="GeneID" id="533245"/>
<dbReference type="KEGG" id="bta:533245"/>
<dbReference type="CTD" id="51010"/>
<dbReference type="VEuPathDB" id="HostDB:ENSBTAG00000018925"/>
<dbReference type="VGNC" id="VGNC:28658">
    <property type="gene designation" value="EXOSC3"/>
</dbReference>
<dbReference type="eggNOG" id="KOG1004">
    <property type="taxonomic scope" value="Eukaryota"/>
</dbReference>
<dbReference type="GeneTree" id="ENSGT00940000153596"/>
<dbReference type="HOGENOM" id="CLU_069847_1_0_1"/>
<dbReference type="InParanoid" id="Q3T0E1"/>
<dbReference type="OMA" id="SYMAFPN"/>
<dbReference type="OrthoDB" id="340500at2759"/>
<dbReference type="TreeFam" id="TF314927"/>
<dbReference type="Reactome" id="R-BTA-429958">
    <property type="pathway name" value="mRNA decay by 3' to 5' exoribonuclease"/>
</dbReference>
<dbReference type="Reactome" id="R-BTA-450385">
    <property type="pathway name" value="Butyrate Response Factor 1 (BRF1) binds and destabilizes mRNA"/>
</dbReference>
<dbReference type="Reactome" id="R-BTA-450513">
    <property type="pathway name" value="Tristetraprolin (TTP, ZFP36) binds and destabilizes mRNA"/>
</dbReference>
<dbReference type="Reactome" id="R-BTA-450604">
    <property type="pathway name" value="KSRP (KHSRP) binds and destabilizes mRNA"/>
</dbReference>
<dbReference type="Reactome" id="R-BTA-6791226">
    <property type="pathway name" value="Major pathway of rRNA processing in the nucleolus and cytosol"/>
</dbReference>
<dbReference type="CD-CODE" id="D7FE2080">
    <property type="entry name" value="Nucleolus"/>
</dbReference>
<dbReference type="Proteomes" id="UP000009136">
    <property type="component" value="Chromosome 8"/>
</dbReference>
<dbReference type="Bgee" id="ENSBTAG00000018925">
    <property type="expression patterns" value="Expressed in oocyte and 105 other cell types or tissues"/>
</dbReference>
<dbReference type="GO" id="GO:0000177">
    <property type="term" value="C:cytoplasmic exosome (RNase complex)"/>
    <property type="evidence" value="ECO:0000318"/>
    <property type="project" value="GO_Central"/>
</dbReference>
<dbReference type="GO" id="GO:0005829">
    <property type="term" value="C:cytosol"/>
    <property type="evidence" value="ECO:0007669"/>
    <property type="project" value="Ensembl"/>
</dbReference>
<dbReference type="GO" id="GO:0000791">
    <property type="term" value="C:euchromatin"/>
    <property type="evidence" value="ECO:0007669"/>
    <property type="project" value="Ensembl"/>
</dbReference>
<dbReference type="GO" id="GO:0000178">
    <property type="term" value="C:exosome (RNase complex)"/>
    <property type="evidence" value="ECO:0000250"/>
    <property type="project" value="UniProtKB"/>
</dbReference>
<dbReference type="GO" id="GO:0000176">
    <property type="term" value="C:nuclear exosome (RNase complex)"/>
    <property type="evidence" value="ECO:0000318"/>
    <property type="project" value="GO_Central"/>
</dbReference>
<dbReference type="GO" id="GO:0005730">
    <property type="term" value="C:nucleolus"/>
    <property type="evidence" value="ECO:0000250"/>
    <property type="project" value="UniProtKB"/>
</dbReference>
<dbReference type="GO" id="GO:0005654">
    <property type="term" value="C:nucleoplasm"/>
    <property type="evidence" value="ECO:0007669"/>
    <property type="project" value="Ensembl"/>
</dbReference>
<dbReference type="GO" id="GO:0003723">
    <property type="term" value="F:RNA binding"/>
    <property type="evidence" value="ECO:0000318"/>
    <property type="project" value="GO_Central"/>
</dbReference>
<dbReference type="GO" id="GO:0071034">
    <property type="term" value="P:CUT catabolic process"/>
    <property type="evidence" value="ECO:0000318"/>
    <property type="project" value="GO_Central"/>
</dbReference>
<dbReference type="GO" id="GO:0045006">
    <property type="term" value="P:DNA deamination"/>
    <property type="evidence" value="ECO:0007669"/>
    <property type="project" value="Ensembl"/>
</dbReference>
<dbReference type="GO" id="GO:0000467">
    <property type="term" value="P:exonucleolytic trimming to generate mature 3'-end of 5.8S rRNA from tricistronic rRNA transcript (SSU-rRNA, 5.8S rRNA, LSU-rRNA)"/>
    <property type="evidence" value="ECO:0000318"/>
    <property type="project" value="GO_Central"/>
</dbReference>
<dbReference type="GO" id="GO:0045190">
    <property type="term" value="P:isotype switching"/>
    <property type="evidence" value="ECO:0007669"/>
    <property type="project" value="Ensembl"/>
</dbReference>
<dbReference type="GO" id="GO:0071035">
    <property type="term" value="P:nuclear polyadenylation-dependent rRNA catabolic process"/>
    <property type="evidence" value="ECO:0000318"/>
    <property type="project" value="GO_Central"/>
</dbReference>
<dbReference type="GO" id="GO:0000956">
    <property type="term" value="P:nuclear-transcribed mRNA catabolic process"/>
    <property type="evidence" value="ECO:0000318"/>
    <property type="project" value="GO_Central"/>
</dbReference>
<dbReference type="GO" id="GO:0071051">
    <property type="term" value="P:poly(A)-dependent snoRNA 3'-end processing"/>
    <property type="evidence" value="ECO:0000318"/>
    <property type="project" value="GO_Central"/>
</dbReference>
<dbReference type="GO" id="GO:0045830">
    <property type="term" value="P:positive regulation of isotype switching"/>
    <property type="evidence" value="ECO:0007669"/>
    <property type="project" value="Ensembl"/>
</dbReference>
<dbReference type="GO" id="GO:0071038">
    <property type="term" value="P:TRAMP-dependent tRNA surveillance pathway"/>
    <property type="evidence" value="ECO:0000318"/>
    <property type="project" value="GO_Central"/>
</dbReference>
<dbReference type="GO" id="GO:0034475">
    <property type="term" value="P:U4 snRNA 3'-end processing"/>
    <property type="evidence" value="ECO:0000318"/>
    <property type="project" value="GO_Central"/>
</dbReference>
<dbReference type="CDD" id="cd22526">
    <property type="entry name" value="KH-I_Rrp40"/>
    <property type="match status" value="1"/>
</dbReference>
<dbReference type="CDD" id="cd05790">
    <property type="entry name" value="S1_Rrp40"/>
    <property type="match status" value="1"/>
</dbReference>
<dbReference type="FunFam" id="2.40.50.140:FF:000112">
    <property type="entry name" value="Exosome complex component RRP40"/>
    <property type="match status" value="1"/>
</dbReference>
<dbReference type="FunFam" id="2.40.50.100:FF:000044">
    <property type="entry name" value="exosome complex component RRP40"/>
    <property type="match status" value="1"/>
</dbReference>
<dbReference type="FunFam" id="3.30.1370.10:FF:000038">
    <property type="entry name" value="exosome complex component RRP40"/>
    <property type="match status" value="1"/>
</dbReference>
<dbReference type="Gene3D" id="2.40.50.100">
    <property type="match status" value="1"/>
</dbReference>
<dbReference type="Gene3D" id="3.30.1370.10">
    <property type="entry name" value="K Homology domain, type 1"/>
    <property type="match status" value="1"/>
</dbReference>
<dbReference type="Gene3D" id="2.40.50.140">
    <property type="entry name" value="Nucleic acid-binding proteins"/>
    <property type="match status" value="1"/>
</dbReference>
<dbReference type="InterPro" id="IPR026699">
    <property type="entry name" value="Exosome_RNA_bind1/RRP40/RRP4"/>
</dbReference>
<dbReference type="InterPro" id="IPR004088">
    <property type="entry name" value="KH_dom_type_1"/>
</dbReference>
<dbReference type="InterPro" id="IPR036612">
    <property type="entry name" value="KH_dom_type_1_sf"/>
</dbReference>
<dbReference type="InterPro" id="IPR012340">
    <property type="entry name" value="NA-bd_OB-fold"/>
</dbReference>
<dbReference type="InterPro" id="IPR049469">
    <property type="entry name" value="RRP40_KH-I"/>
</dbReference>
<dbReference type="InterPro" id="IPR048541">
    <property type="entry name" value="RRP40_N"/>
</dbReference>
<dbReference type="InterPro" id="IPR037319">
    <property type="entry name" value="Rrp40_S1"/>
</dbReference>
<dbReference type="PANTHER" id="PTHR21321:SF1">
    <property type="entry name" value="EXOSOME COMPLEX COMPONENT RRP40"/>
    <property type="match status" value="1"/>
</dbReference>
<dbReference type="PANTHER" id="PTHR21321">
    <property type="entry name" value="PNAS-3 RELATED"/>
    <property type="match status" value="1"/>
</dbReference>
<dbReference type="Pfam" id="PF15985">
    <property type="entry name" value="KH_6"/>
    <property type="match status" value="1"/>
</dbReference>
<dbReference type="Pfam" id="PF21261">
    <property type="entry name" value="RRP40_N_mamm"/>
    <property type="match status" value="1"/>
</dbReference>
<dbReference type="Pfam" id="PF21262">
    <property type="entry name" value="RRP40_S1"/>
    <property type="match status" value="1"/>
</dbReference>
<dbReference type="SUPFAM" id="SSF54791">
    <property type="entry name" value="Eukaryotic type KH-domain (KH-domain type I)"/>
    <property type="match status" value="1"/>
</dbReference>
<dbReference type="SUPFAM" id="SSF50249">
    <property type="entry name" value="Nucleic acid-binding proteins"/>
    <property type="match status" value="1"/>
</dbReference>
<dbReference type="SUPFAM" id="SSF110324">
    <property type="entry name" value="Ribosomal L27 protein-like"/>
    <property type="match status" value="1"/>
</dbReference>
<reference key="1">
    <citation type="submission" date="2005-08" db="EMBL/GenBank/DDBJ databases">
        <authorList>
            <consortium name="NIH - Mammalian Gene Collection (MGC) project"/>
        </authorList>
    </citation>
    <scope>NUCLEOTIDE SEQUENCE [LARGE SCALE MRNA]</scope>
    <source>
        <strain>Crossbred X Angus</strain>
        <tissue>Ileum</tissue>
    </source>
</reference>
<sequence>MAEAAGVPAESLAGCRARAARTVLDQVVLPGEELLLPDQEDGDGPGGAGERPLRLNAAARSRGRVVCGPGLRRCGDRLLVTKCGRLRHKEPGSGSGGGVYWVDSQQKRYVPVKGDHVIGIVTAKSGDIFKVDVGGSEPASLSYLAFEGATKRNRPNVQVGDLIYGQFVVANKDMEPEMVCIDSCGRANGMGVIGQDGLLFKVTLGLIRKLLAPDCEILQEVGKLYPLEIVFGMNGRIWVKAKTIQQTLILANILEACEHMTADQRKQIFSRLAES</sequence>
<keyword id="KW-0007">Acetylation</keyword>
<keyword id="KW-0963">Cytoplasm</keyword>
<keyword id="KW-0271">Exosome</keyword>
<keyword id="KW-1017">Isopeptide bond</keyword>
<keyword id="KW-0539">Nucleus</keyword>
<keyword id="KW-1185">Reference proteome</keyword>
<keyword id="KW-0694">RNA-binding</keyword>
<keyword id="KW-0698">rRNA processing</keyword>
<keyword id="KW-0832">Ubl conjugation</keyword>
<protein>
    <recommendedName>
        <fullName>Exosome complex component RRP40</fullName>
    </recommendedName>
    <alternativeName>
        <fullName>Exosome component 3</fullName>
    </alternativeName>
    <alternativeName>
        <fullName>Ribosomal RNA-processing protein 40</fullName>
    </alternativeName>
</protein>
<evidence type="ECO:0000250" key="1">
    <source>
        <dbReference type="UniProtKB" id="Q9NQT5"/>
    </source>
</evidence>
<evidence type="ECO:0000305" key="2"/>